<gene>
    <name evidence="1" type="primary">smpB</name>
    <name type="ordered locus">BDI_0413</name>
</gene>
<feature type="chain" id="PRO_1000002099" description="SsrA-binding protein">
    <location>
        <begin position="1"/>
        <end position="153"/>
    </location>
</feature>
<feature type="region of interest" description="Disordered" evidence="2">
    <location>
        <begin position="131"/>
        <end position="153"/>
    </location>
</feature>
<evidence type="ECO:0000255" key="1">
    <source>
        <dbReference type="HAMAP-Rule" id="MF_00023"/>
    </source>
</evidence>
<evidence type="ECO:0000256" key="2">
    <source>
        <dbReference type="SAM" id="MobiDB-lite"/>
    </source>
</evidence>
<keyword id="KW-0963">Cytoplasm</keyword>
<keyword id="KW-1185">Reference proteome</keyword>
<keyword id="KW-0694">RNA-binding</keyword>
<reference key="1">
    <citation type="journal article" date="2007" name="PLoS Biol.">
        <title>Evolution of symbiotic bacteria in the distal human intestine.</title>
        <authorList>
            <person name="Xu J."/>
            <person name="Mahowald M.A."/>
            <person name="Ley R.E."/>
            <person name="Lozupone C.A."/>
            <person name="Hamady M."/>
            <person name="Martens E.C."/>
            <person name="Henrissat B."/>
            <person name="Coutinho P.M."/>
            <person name="Minx P."/>
            <person name="Latreille P."/>
            <person name="Cordum H."/>
            <person name="Van Brunt A."/>
            <person name="Kim K."/>
            <person name="Fulton R.S."/>
            <person name="Fulton L.A."/>
            <person name="Clifton S.W."/>
            <person name="Wilson R.K."/>
            <person name="Knight R.D."/>
            <person name="Gordon J.I."/>
        </authorList>
    </citation>
    <scope>NUCLEOTIDE SEQUENCE [LARGE SCALE GENOMIC DNA]</scope>
    <source>
        <strain>ATCC 8503 / DSM 20701 / CIP 104284 / JCM 5825 / NCTC 11152</strain>
    </source>
</reference>
<accession>A6L927</accession>
<dbReference type="EMBL" id="CP000140">
    <property type="protein sequence ID" value="ABR42191.1"/>
    <property type="molecule type" value="Genomic_DNA"/>
</dbReference>
<dbReference type="RefSeq" id="WP_005855460.1">
    <property type="nucleotide sequence ID" value="NZ_LR215978.1"/>
</dbReference>
<dbReference type="SMR" id="A6L927"/>
<dbReference type="STRING" id="435591.BDI_0413"/>
<dbReference type="PaxDb" id="435591-BDI_0413"/>
<dbReference type="GeneID" id="93524969"/>
<dbReference type="KEGG" id="pdi:BDI_0413"/>
<dbReference type="eggNOG" id="COG0691">
    <property type="taxonomic scope" value="Bacteria"/>
</dbReference>
<dbReference type="HOGENOM" id="CLU_108953_0_1_10"/>
<dbReference type="BioCyc" id="PDIS435591:G1G5A-424-MONOMER"/>
<dbReference type="Proteomes" id="UP000000566">
    <property type="component" value="Chromosome"/>
</dbReference>
<dbReference type="GO" id="GO:0005829">
    <property type="term" value="C:cytosol"/>
    <property type="evidence" value="ECO:0007669"/>
    <property type="project" value="TreeGrafter"/>
</dbReference>
<dbReference type="GO" id="GO:0003723">
    <property type="term" value="F:RNA binding"/>
    <property type="evidence" value="ECO:0007669"/>
    <property type="project" value="UniProtKB-UniRule"/>
</dbReference>
<dbReference type="GO" id="GO:0070929">
    <property type="term" value="P:trans-translation"/>
    <property type="evidence" value="ECO:0007669"/>
    <property type="project" value="UniProtKB-UniRule"/>
</dbReference>
<dbReference type="Gene3D" id="2.40.280.10">
    <property type="match status" value="1"/>
</dbReference>
<dbReference type="HAMAP" id="MF_00023">
    <property type="entry name" value="SmpB"/>
    <property type="match status" value="1"/>
</dbReference>
<dbReference type="InterPro" id="IPR023620">
    <property type="entry name" value="SmpB"/>
</dbReference>
<dbReference type="InterPro" id="IPR000037">
    <property type="entry name" value="SsrA-bd_prot"/>
</dbReference>
<dbReference type="InterPro" id="IPR020081">
    <property type="entry name" value="SsrA-bd_prot_CS"/>
</dbReference>
<dbReference type="NCBIfam" id="NF003843">
    <property type="entry name" value="PRK05422.1"/>
    <property type="match status" value="1"/>
</dbReference>
<dbReference type="NCBIfam" id="TIGR00086">
    <property type="entry name" value="smpB"/>
    <property type="match status" value="1"/>
</dbReference>
<dbReference type="PANTHER" id="PTHR30308:SF2">
    <property type="entry name" value="SSRA-BINDING PROTEIN"/>
    <property type="match status" value="1"/>
</dbReference>
<dbReference type="PANTHER" id="PTHR30308">
    <property type="entry name" value="TMRNA-BINDING COMPONENT OF TRANS-TRANSLATION TAGGING COMPLEX"/>
    <property type="match status" value="1"/>
</dbReference>
<dbReference type="Pfam" id="PF01668">
    <property type="entry name" value="SmpB"/>
    <property type="match status" value="1"/>
</dbReference>
<dbReference type="SUPFAM" id="SSF74982">
    <property type="entry name" value="Small protein B (SmpB)"/>
    <property type="match status" value="1"/>
</dbReference>
<dbReference type="PROSITE" id="PS01317">
    <property type="entry name" value="SSRP"/>
    <property type="match status" value="1"/>
</dbReference>
<protein>
    <recommendedName>
        <fullName evidence="1">SsrA-binding protein</fullName>
    </recommendedName>
    <alternativeName>
        <fullName evidence="1">Small protein B</fullName>
    </alternativeName>
</protein>
<organism>
    <name type="scientific">Parabacteroides distasonis (strain ATCC 8503 / DSM 20701 / CIP 104284 / JCM 5825 / NCTC 11152)</name>
    <dbReference type="NCBI Taxonomy" id="435591"/>
    <lineage>
        <taxon>Bacteria</taxon>
        <taxon>Pseudomonadati</taxon>
        <taxon>Bacteroidota</taxon>
        <taxon>Bacteroidia</taxon>
        <taxon>Bacteroidales</taxon>
        <taxon>Tannerellaceae</taxon>
        <taxon>Parabacteroides</taxon>
    </lineage>
</organism>
<sequence length="153" mass="17840">MKEKISNNIQIKNKRATFDYELLDTFTAGIVLTGTEIKSIRLGKASLVDTFCIVEKGELWVKNMYIAEYFYGTYNNHNARRDRKLLLTKKELRKIEGAVRASGFTIVPTRLFINEKGLAKVVVAIARGKKEYDKRDSIRERDDRREMDRAFKR</sequence>
<comment type="function">
    <text evidence="1">Required for rescue of stalled ribosomes mediated by trans-translation. Binds to transfer-messenger RNA (tmRNA), required for stable association of tmRNA with ribosomes. tmRNA and SmpB together mimic tRNA shape, replacing the anticodon stem-loop with SmpB. tmRNA is encoded by the ssrA gene; the 2 termini fold to resemble tRNA(Ala) and it encodes a 'tag peptide', a short internal open reading frame. During trans-translation Ala-aminoacylated tmRNA acts like a tRNA, entering the A-site of stalled ribosomes, displacing the stalled mRNA. The ribosome then switches to translate the ORF on the tmRNA; the nascent peptide is terminated with the 'tag peptide' encoded by the tmRNA and targeted for degradation. The ribosome is freed to recommence translation, which seems to be the essential function of trans-translation.</text>
</comment>
<comment type="subcellular location">
    <subcellularLocation>
        <location evidence="1">Cytoplasm</location>
    </subcellularLocation>
    <text evidence="1">The tmRNA-SmpB complex associates with stalled 70S ribosomes.</text>
</comment>
<comment type="similarity">
    <text evidence="1">Belongs to the SmpB family.</text>
</comment>
<proteinExistence type="inferred from homology"/>
<name>SSRP_PARD8</name>